<name>PSBD_PIPCE</name>
<sequence>MTIALGRFTKEEEKDLFDIMDDWLRRDRFVFVGWSGLLLFPCAYFALGGWFTGTTFVTSWYTHGLASSYLEGCNFLTAAVSTPANSLAHSLLLLWGPEAQGDFTRWCQLGGLWTFVALHGAFALIGFMLRQFELARSVQLRPYNAIAFSGPIAVFVSVFLIYPLGQSGWFFAPSFGVAAIFRFILFFQGFHNWTLNPFHMMGVAGVLGAALLCAIHGATVENTLFEDGDGANTFRAFNPTQAEETYSMVTANRFWSQIFGVAFSNKRWLHFFMLFVPVTGLWMSALGVVGLALNLRAYDFVSQEIRAAEDPEFETFYTKNILLNEGIRAWMAAQDQPHENLVFPEEVLPRGNAL</sequence>
<organism>
    <name type="scientific">Piper cenocladum</name>
    <name type="common">Ant piper</name>
    <dbReference type="NCBI Taxonomy" id="398741"/>
    <lineage>
        <taxon>Eukaryota</taxon>
        <taxon>Viridiplantae</taxon>
        <taxon>Streptophyta</taxon>
        <taxon>Embryophyta</taxon>
        <taxon>Tracheophyta</taxon>
        <taxon>Spermatophyta</taxon>
        <taxon>Magnoliopsida</taxon>
        <taxon>Magnoliidae</taxon>
        <taxon>Piperales</taxon>
        <taxon>Piperaceae</taxon>
        <taxon>Piper</taxon>
    </lineage>
</organism>
<protein>
    <recommendedName>
        <fullName evidence="2">Photosystem II D2 protein</fullName>
        <shortName evidence="2">PSII D2 protein</shortName>
        <ecNumber evidence="2">1.10.3.9</ecNumber>
    </recommendedName>
    <alternativeName>
        <fullName evidence="2">Photosystem Q(A) protein</fullName>
    </alternativeName>
</protein>
<dbReference type="EC" id="1.10.3.9" evidence="2"/>
<dbReference type="EMBL" id="DQ887677">
    <property type="protein sequence ID" value="ABI14467.1"/>
    <property type="molecule type" value="Genomic_DNA"/>
</dbReference>
<dbReference type="RefSeq" id="YP_784468.1">
    <property type="nucleotide sequence ID" value="NC_008457.1"/>
</dbReference>
<dbReference type="SMR" id="Q06GR5"/>
<dbReference type="GeneID" id="4363728"/>
<dbReference type="GO" id="GO:0009535">
    <property type="term" value="C:chloroplast thylakoid membrane"/>
    <property type="evidence" value="ECO:0007669"/>
    <property type="project" value="UniProtKB-SubCell"/>
</dbReference>
<dbReference type="GO" id="GO:0009523">
    <property type="term" value="C:photosystem II"/>
    <property type="evidence" value="ECO:0007669"/>
    <property type="project" value="UniProtKB-KW"/>
</dbReference>
<dbReference type="GO" id="GO:0016168">
    <property type="term" value="F:chlorophyll binding"/>
    <property type="evidence" value="ECO:0007669"/>
    <property type="project" value="UniProtKB-UniRule"/>
</dbReference>
<dbReference type="GO" id="GO:0045156">
    <property type="term" value="F:electron transporter, transferring electrons within the cyclic electron transport pathway of photosynthesis activity"/>
    <property type="evidence" value="ECO:0007669"/>
    <property type="project" value="InterPro"/>
</dbReference>
<dbReference type="GO" id="GO:0005506">
    <property type="term" value="F:iron ion binding"/>
    <property type="evidence" value="ECO:0007669"/>
    <property type="project" value="UniProtKB-UniRule"/>
</dbReference>
<dbReference type="GO" id="GO:0010242">
    <property type="term" value="F:oxygen evolving activity"/>
    <property type="evidence" value="ECO:0007669"/>
    <property type="project" value="UniProtKB-EC"/>
</dbReference>
<dbReference type="GO" id="GO:0009772">
    <property type="term" value="P:photosynthetic electron transport in photosystem II"/>
    <property type="evidence" value="ECO:0007669"/>
    <property type="project" value="InterPro"/>
</dbReference>
<dbReference type="CDD" id="cd09288">
    <property type="entry name" value="Photosystem-II_D2"/>
    <property type="match status" value="1"/>
</dbReference>
<dbReference type="FunFam" id="1.20.85.10:FF:000001">
    <property type="entry name" value="photosystem II D2 protein-like"/>
    <property type="match status" value="1"/>
</dbReference>
<dbReference type="Gene3D" id="1.20.85.10">
    <property type="entry name" value="Photosystem II protein D1-like"/>
    <property type="match status" value="1"/>
</dbReference>
<dbReference type="HAMAP" id="MF_01383">
    <property type="entry name" value="PSII_PsbD_D2"/>
    <property type="match status" value="1"/>
</dbReference>
<dbReference type="InterPro" id="IPR055266">
    <property type="entry name" value="D1/D2"/>
</dbReference>
<dbReference type="InterPro" id="IPR036854">
    <property type="entry name" value="Photo_II_D1/D2_sf"/>
</dbReference>
<dbReference type="InterPro" id="IPR000484">
    <property type="entry name" value="Photo_RC_L/M"/>
</dbReference>
<dbReference type="InterPro" id="IPR055265">
    <property type="entry name" value="Photo_RC_L/M_CS"/>
</dbReference>
<dbReference type="InterPro" id="IPR005868">
    <property type="entry name" value="PSII_PsbD/D2"/>
</dbReference>
<dbReference type="NCBIfam" id="TIGR01152">
    <property type="entry name" value="psbD"/>
    <property type="match status" value="1"/>
</dbReference>
<dbReference type="PANTHER" id="PTHR33149:SF12">
    <property type="entry name" value="PHOTOSYSTEM II D2 PROTEIN"/>
    <property type="match status" value="1"/>
</dbReference>
<dbReference type="PANTHER" id="PTHR33149">
    <property type="entry name" value="PHOTOSYSTEM II PROTEIN D1"/>
    <property type="match status" value="1"/>
</dbReference>
<dbReference type="Pfam" id="PF00124">
    <property type="entry name" value="Photo_RC"/>
    <property type="match status" value="1"/>
</dbReference>
<dbReference type="PRINTS" id="PR00256">
    <property type="entry name" value="REACTNCENTRE"/>
</dbReference>
<dbReference type="SUPFAM" id="SSF81483">
    <property type="entry name" value="Bacterial photosystem II reaction centre, L and M subunits"/>
    <property type="match status" value="1"/>
</dbReference>
<dbReference type="PROSITE" id="PS00244">
    <property type="entry name" value="REACTION_CENTER"/>
    <property type="match status" value="1"/>
</dbReference>
<feature type="initiator methionine" description="Removed" evidence="1">
    <location>
        <position position="1"/>
    </location>
</feature>
<feature type="chain" id="PRO_0000359687" description="Photosystem II D2 protein">
    <location>
        <begin position="2"/>
        <end position="354"/>
    </location>
</feature>
<feature type="transmembrane region" description="Helical" evidence="2">
    <location>
        <begin position="42"/>
        <end position="62"/>
    </location>
</feature>
<feature type="transmembrane region" description="Helical" evidence="2">
    <location>
        <begin position="126"/>
        <end position="142"/>
    </location>
</feature>
<feature type="transmembrane region" description="Helical" evidence="2">
    <location>
        <begin position="154"/>
        <end position="167"/>
    </location>
</feature>
<feature type="transmembrane region" description="Helical" evidence="2">
    <location>
        <begin position="209"/>
        <end position="229"/>
    </location>
</feature>
<feature type="transmembrane region" description="Helical" evidence="2">
    <location>
        <begin position="280"/>
        <end position="296"/>
    </location>
</feature>
<feature type="binding site" description="axial binding residue" evidence="2">
    <location>
        <position position="119"/>
    </location>
    <ligand>
        <name>chlorophyll a</name>
        <dbReference type="ChEBI" id="CHEBI:58416"/>
        <label>ChlzD2</label>
    </ligand>
    <ligandPart>
        <name>Mg</name>
        <dbReference type="ChEBI" id="CHEBI:25107"/>
    </ligandPart>
</feature>
<feature type="binding site" evidence="2">
    <location>
        <position position="131"/>
    </location>
    <ligand>
        <name>pheophytin a</name>
        <dbReference type="ChEBI" id="CHEBI:136840"/>
        <label>D2</label>
    </ligand>
</feature>
<feature type="binding site" evidence="2">
    <location>
        <position position="144"/>
    </location>
    <ligand>
        <name>pheophytin a</name>
        <dbReference type="ChEBI" id="CHEBI:136840"/>
        <label>D2</label>
    </ligand>
</feature>
<feature type="binding site" description="axial binding residue" evidence="2">
    <location>
        <position position="199"/>
    </location>
    <ligand>
        <name>chlorophyll a</name>
        <dbReference type="ChEBI" id="CHEBI:58416"/>
        <label>PD2</label>
    </ligand>
    <ligandPart>
        <name>Mg</name>
        <dbReference type="ChEBI" id="CHEBI:25107"/>
    </ligandPart>
</feature>
<feature type="binding site" evidence="2">
    <location>
        <position position="216"/>
    </location>
    <ligand>
        <name>a plastoquinone</name>
        <dbReference type="ChEBI" id="CHEBI:17757"/>
        <label>Q(A)</label>
    </ligand>
</feature>
<feature type="binding site" evidence="2">
    <location>
        <position position="216"/>
    </location>
    <ligand>
        <name>Fe cation</name>
        <dbReference type="ChEBI" id="CHEBI:24875"/>
        <note>ligand shared with heterodimeric partner</note>
    </ligand>
</feature>
<feature type="binding site" evidence="2">
    <location>
        <position position="263"/>
    </location>
    <ligand>
        <name>a plastoquinone</name>
        <dbReference type="ChEBI" id="CHEBI:17757"/>
        <label>Q(A)</label>
    </ligand>
</feature>
<feature type="binding site" evidence="2">
    <location>
        <position position="270"/>
    </location>
    <ligand>
        <name>Fe cation</name>
        <dbReference type="ChEBI" id="CHEBI:24875"/>
        <note>ligand shared with heterodimeric partner</note>
    </ligand>
</feature>
<feature type="modified residue" description="N-acetylthreonine" evidence="1">
    <location>
        <position position="2"/>
    </location>
</feature>
<feature type="modified residue" description="Phosphothreonine" evidence="1">
    <location>
        <position position="2"/>
    </location>
</feature>
<gene>
    <name evidence="2" type="primary">psbD</name>
</gene>
<accession>Q06GR5</accession>
<proteinExistence type="inferred from homology"/>
<reference key="1">
    <citation type="journal article" date="2006" name="BMC Evol. Biol.">
        <title>Complete plastid genome sequences of Drimys, Liriodendron, and Piper: implications for the phylogenetic relationships of magnoliids.</title>
        <authorList>
            <person name="Cai Z."/>
            <person name="Penaflor C."/>
            <person name="Kuehl J.V."/>
            <person name="Leebens-Mack J."/>
            <person name="Carlson J.E."/>
            <person name="dePamphilis C.W."/>
            <person name="Boore J.L."/>
            <person name="Jansen R.K."/>
        </authorList>
    </citation>
    <scope>NUCLEOTIDE SEQUENCE [LARGE SCALE GENOMIC DNA]</scope>
</reference>
<geneLocation type="chloroplast"/>
<evidence type="ECO:0000250" key="1">
    <source>
        <dbReference type="UniProtKB" id="P56761"/>
    </source>
</evidence>
<evidence type="ECO:0000255" key="2">
    <source>
        <dbReference type="HAMAP-Rule" id="MF_01383"/>
    </source>
</evidence>
<comment type="function">
    <text evidence="2">Photosystem II (PSII) is a light-driven water:plastoquinone oxidoreductase that uses light energy to abstract electrons from H(2)O, generating O(2) and a proton gradient subsequently used for ATP formation. It consists of a core antenna complex that captures photons, and an electron transfer chain that converts photonic excitation into a charge separation. The D1/D2 (PsbA/PsbD) reaction center heterodimer binds P680, the primary electron donor of PSII as well as several subsequent electron acceptors. D2 is needed for assembly of a stable PSII complex.</text>
</comment>
<comment type="catalytic activity">
    <reaction evidence="2">
        <text>2 a plastoquinone + 4 hnu + 2 H2O = 2 a plastoquinol + O2</text>
        <dbReference type="Rhea" id="RHEA:36359"/>
        <dbReference type="Rhea" id="RHEA-COMP:9561"/>
        <dbReference type="Rhea" id="RHEA-COMP:9562"/>
        <dbReference type="ChEBI" id="CHEBI:15377"/>
        <dbReference type="ChEBI" id="CHEBI:15379"/>
        <dbReference type="ChEBI" id="CHEBI:17757"/>
        <dbReference type="ChEBI" id="CHEBI:30212"/>
        <dbReference type="ChEBI" id="CHEBI:62192"/>
        <dbReference type="EC" id="1.10.3.9"/>
    </reaction>
</comment>
<comment type="cofactor">
    <text evidence="2">The D1/D2 heterodimer binds P680, chlorophylls that are the primary electron donor of PSII, and subsequent electron acceptors. It shares a non-heme iron and each subunit binds pheophytin, quinone, additional chlorophylls, carotenoids and lipids. There is also a Cl(-1) ion associated with D1 and D2, which is required for oxygen evolution. The PSII complex binds additional chlorophylls, carotenoids and specific lipids.</text>
</comment>
<comment type="subunit">
    <text evidence="2">PSII is composed of 1 copy each of membrane proteins PsbA, PsbB, PsbC, PsbD, PsbE, PsbF, PsbH, PsbI, PsbJ, PsbK, PsbL, PsbM, PsbT, PsbX, PsbY, PsbZ, Psb30/Ycf12, at least 3 peripheral proteins of the oxygen-evolving complex and a large number of cofactors. It forms dimeric complexes.</text>
</comment>
<comment type="subcellular location">
    <subcellularLocation>
        <location evidence="2">Plastid</location>
        <location evidence="2">Chloroplast thylakoid membrane</location>
        <topology evidence="2">Multi-pass membrane protein</topology>
    </subcellularLocation>
</comment>
<comment type="miscellaneous">
    <text evidence="2">2 of the reaction center chlorophylls (ChlD1 and ChlD2) are entirely coordinated by water.</text>
</comment>
<comment type="similarity">
    <text evidence="2">Belongs to the reaction center PufL/M/PsbA/D family.</text>
</comment>
<keyword id="KW-0007">Acetylation</keyword>
<keyword id="KW-0148">Chlorophyll</keyword>
<keyword id="KW-0150">Chloroplast</keyword>
<keyword id="KW-0157">Chromophore</keyword>
<keyword id="KW-0249">Electron transport</keyword>
<keyword id="KW-0408">Iron</keyword>
<keyword id="KW-0460">Magnesium</keyword>
<keyword id="KW-0472">Membrane</keyword>
<keyword id="KW-0479">Metal-binding</keyword>
<keyword id="KW-0560">Oxidoreductase</keyword>
<keyword id="KW-0597">Phosphoprotein</keyword>
<keyword id="KW-0602">Photosynthesis</keyword>
<keyword id="KW-0604">Photosystem II</keyword>
<keyword id="KW-0934">Plastid</keyword>
<keyword id="KW-0793">Thylakoid</keyword>
<keyword id="KW-0812">Transmembrane</keyword>
<keyword id="KW-1133">Transmembrane helix</keyword>
<keyword id="KW-0813">Transport</keyword>